<sequence length="1610" mass="182328">MMMMMMKKMQHQRQQQEDHANEANYARGTRPPISGEGPTSQPNSSKQTVLSWQAAIDAARQAKAAQTMSTSAPPPVGSLSQRKRQQYAKSKKQGNSSNSRPARALFCLSLNNPIRRACISIVEWKPFDIFILLAIFANCVALAIYIPFPEDDSNSTNHNLEKVEYAFLIIFTVETFLKIIAYGLLLHPNAYVRNGWNLLDFVIVIVGLFSVILEQLTKETEGGNHSSGKSGGFDVKALRAFRVLRPLRLVSGVPSLQVVLNSIIKAMVPLLHIALLVLFVIIIYAIIGLELFIGKMHKTCFFADSDIVAEEDPAPCAFSGNGRQCAVNGTECRSGWVGPNGGITNFDNFAFAMLTVFQCITMEGWTDVLYWMNDAMGFELPWVYFVSLVIFGSFFVLNLVLGVLSGEFSKEREKAKARGDFQKLRENEQLEEDLKGYLDWITQAEDIDPENEEEGGEEGKRNTSMPTSETESVNTENVSGEGETQGSCGSLCQAISKSKLSRRWRRWNRFNRRRCRAAVKSVTFYWLVIVLVFLNTLTISSEHYNQPDWLTQIQDIANKVLLALFTCEMLVKMYSLGLQAYFVSLFNRFDCFVVCGGITETILVELELMSPLGVSVFRCVRLLRIFKVTRHWTSLSNLVASLLNSMKSIASLLLLLFLFIIIFSLLGMQLFGGKFNFDETQTKRSTFDNFPQALLTVFQILTGEDWNAVMYDGIMAYGGPSSSGMIVCIYFIILFICGNYILLNVFLAIAVDNLADAESLNTAQKEEAEEKERKKIARKESLENKKNNKPEVNQIANSDNKVTIDDYQEETEDKDPYPPCDVPVGEEEEEEEEEPEVPAGPRPRRISELNMKEKIVPIPEGSAFFILSKTNPIRVGCHKLINHHIFTNLILVFIMLSSAALAAEDPIRSHSFRNTILGYFDYAFTAIFTVEILLKMTTFGAFLHKGAFCRNYFNLLDMLVVGVSLVSFGIQSSAISVVKILRVLRVLRPLRAINRAKGLKHVVQCVFVAIRTIGNIMIVTTLLQFMFACIGVQLFKGKFYRCTDEAKSNPEECRGLFILYKDGDVDSPVVRERIWQNSDFNFDNVLSAMMALFTVSTFEGWPALLYKAIDSNGENAGPVYNHRVEISIFFIIYIIIVAFFMMNIFVGFVIVTFQEQGEKEYKNCELDKNQRQCVEYALKARPLRRYIPKNPYQYKFWYVVNSSPFEYMMFVLIMLNTLCLAMQHYEQSKMFNDAMDILNMVFTGVFTVEMVLKVIAFKPKGYFSDAWNTFDSLIVIGSIIDVALSEADPTESESLPLPTATPGNSEESNRISITFFRLFRVMRLVKLLSRGEGIRTLLWTFIKSFQALPYVALLIAMLFFIYAVIGMQMFGKVAMRDNNQINRNNNFQTFPQAVLLLFRCATGEAWQEIMLACLPGKLCDPDSDYNPGEEYTCGSNFAIVYFISFYMLCAFLIINLFVAVIMDNFDYLTRDWSILGPHHLDEFKRIWSEYDPEAKGRIKHLDVVTLLRRIQPPLGFGKLCPHRVACKRLVAMNMPLNSDGTVMFNATLFALVRTALKIKTEGNLEQANEELRAVIKKIWKKTSMKLLDQVVPPAGGQCGLCFLSPSRSRS</sequence>
<proteinExistence type="evidence at transcript level"/>
<accession>Q99244</accession>
<accession>Q99245</accession>
<keyword id="KW-0025">Alternative splicing</keyword>
<keyword id="KW-0106">Calcium</keyword>
<keyword id="KW-0107">Calcium channel</keyword>
<keyword id="KW-0109">Calcium transport</keyword>
<keyword id="KW-1015">Disulfide bond</keyword>
<keyword id="KW-0325">Glycoprotein</keyword>
<keyword id="KW-0407">Ion channel</keyword>
<keyword id="KW-0406">Ion transport</keyword>
<keyword id="KW-0472">Membrane</keyword>
<keyword id="KW-0479">Metal-binding</keyword>
<keyword id="KW-0597">Phosphoprotein</keyword>
<keyword id="KW-1185">Reference proteome</keyword>
<keyword id="KW-0677">Repeat</keyword>
<keyword id="KW-0812">Transmembrane</keyword>
<keyword id="KW-1133">Transmembrane helix</keyword>
<keyword id="KW-0813">Transport</keyword>
<keyword id="KW-0851">Voltage-gated channel</keyword>
<protein>
    <recommendedName>
        <fullName>Voltage-dependent L-type calcium channel subunit alpha-1D</fullName>
    </recommendedName>
    <alternativeName>
        <fullName>Calcium channel, L type, alpha-1 polypeptide isoform 2</fullName>
    </alternativeName>
    <alternativeName>
        <fullName>Voltage-gated calcium channel subunit alpha Cav1.3</fullName>
    </alternativeName>
</protein>
<feature type="chain" id="PRO_0000053934" description="Voltage-dependent L-type calcium channel subunit alpha-1D">
    <location>
        <begin position="1"/>
        <end position="1610"/>
    </location>
</feature>
<feature type="topological domain" description="Cytoplasmic" evidence="6">
    <location>
        <begin position="1"/>
        <end position="125"/>
    </location>
</feature>
<feature type="transmembrane region" description="Helical; Name=S1 of repeat I" evidence="6">
    <location>
        <begin position="126"/>
        <end position="144"/>
    </location>
</feature>
<feature type="topological domain" description="Extracellular" evidence="6">
    <location>
        <begin position="145"/>
        <end position="162"/>
    </location>
</feature>
<feature type="transmembrane region" description="Helical; Name=S2 of repeat I" evidence="6">
    <location>
        <begin position="163"/>
        <end position="182"/>
    </location>
</feature>
<feature type="topological domain" description="Cytoplasmic" evidence="6">
    <location>
        <begin position="183"/>
        <end position="194"/>
    </location>
</feature>
<feature type="transmembrane region" description="Helical; Name=S3 of repeat I" evidence="6">
    <location>
        <begin position="195"/>
        <end position="213"/>
    </location>
</feature>
<feature type="topological domain" description="Extracellular" evidence="6">
    <location>
        <begin position="214"/>
        <end position="234"/>
    </location>
</feature>
<feature type="transmembrane region" description="Helical; Name=S4 of repeat I" evidence="6">
    <location>
        <begin position="235"/>
        <end position="253"/>
    </location>
</feature>
<feature type="topological domain" description="Cytoplasmic" evidence="6">
    <location>
        <begin position="254"/>
        <end position="272"/>
    </location>
</feature>
<feature type="transmembrane region" description="Helical; Name=S5 of repeat I" evidence="6">
    <location>
        <begin position="273"/>
        <end position="292"/>
    </location>
</feature>
<feature type="topological domain" description="Extracellular" evidence="6">
    <location>
        <begin position="293"/>
        <end position="380"/>
    </location>
</feature>
<feature type="transmembrane region" description="Helical; Name=S6 of repeat I" evidence="6">
    <location>
        <begin position="381"/>
        <end position="405"/>
    </location>
</feature>
<feature type="topological domain" description="Cytoplasmic" evidence="6">
    <location>
        <begin position="406"/>
        <end position="522"/>
    </location>
</feature>
<feature type="transmembrane region" description="Helical; Name=S1 of repeat II" evidence="6">
    <location>
        <begin position="523"/>
        <end position="542"/>
    </location>
</feature>
<feature type="topological domain" description="Extracellular" evidence="6">
    <location>
        <begin position="543"/>
        <end position="557"/>
    </location>
</feature>
<feature type="transmembrane region" description="Helical; Name=S2 of repeat II" evidence="6">
    <location>
        <begin position="558"/>
        <end position="576"/>
    </location>
</feature>
<feature type="topological domain" description="Cytoplasmic" evidence="6">
    <location>
        <begin position="577"/>
        <end position="584"/>
    </location>
</feature>
<feature type="transmembrane region" description="Helical; Name=S3 of repeat II" evidence="6">
    <location>
        <begin position="585"/>
        <end position="603"/>
    </location>
</feature>
<feature type="topological domain" description="Extracellular" evidence="6">
    <location>
        <begin position="604"/>
        <end position="613"/>
    </location>
</feature>
<feature type="transmembrane region" description="Helical; Name=S4 of repeat II" evidence="6">
    <location>
        <begin position="614"/>
        <end position="632"/>
    </location>
</feature>
<feature type="topological domain" description="Cytoplasmic" evidence="6">
    <location>
        <begin position="633"/>
        <end position="651"/>
    </location>
</feature>
<feature type="transmembrane region" description="Helical; Name=S5 of repeat II" evidence="6">
    <location>
        <begin position="652"/>
        <end position="672"/>
    </location>
</feature>
<feature type="topological domain" description="Extracellular" evidence="6">
    <location>
        <begin position="673"/>
        <end position="726"/>
    </location>
</feature>
<feature type="transmembrane region" description="Helical; Name=S6 of repeat II" evidence="6">
    <location>
        <begin position="727"/>
        <end position="751"/>
    </location>
</feature>
<feature type="topological domain" description="Cytoplasmic" evidence="6">
    <location>
        <begin position="752"/>
        <end position="884"/>
    </location>
</feature>
<feature type="transmembrane region" description="Helical; Name=S1 of repeat III" evidence="6">
    <location>
        <begin position="885"/>
        <end position="903"/>
    </location>
</feature>
<feature type="topological domain" description="Extracellular" evidence="6">
    <location>
        <begin position="904"/>
        <end position="919"/>
    </location>
</feature>
<feature type="transmembrane region" description="Helical; Name=S2 of repeat III" evidence="6">
    <location>
        <begin position="920"/>
        <end position="939"/>
    </location>
</feature>
<feature type="topological domain" description="Cytoplasmic" evidence="6">
    <location>
        <begin position="940"/>
        <end position="951"/>
    </location>
</feature>
<feature type="transmembrane region" description="Helical; Name=S3 of repeat III" evidence="6">
    <location>
        <begin position="952"/>
        <end position="970"/>
    </location>
</feature>
<feature type="topological domain" description="Extracellular" evidence="6">
    <location>
        <begin position="971"/>
        <end position="976"/>
    </location>
</feature>
<feature type="transmembrane region" description="Helical; Name=S4 of repeat III" evidence="6">
    <location>
        <begin position="977"/>
        <end position="996"/>
    </location>
</feature>
<feature type="topological domain" description="Cytoplasmic" evidence="6">
    <location>
        <begin position="997"/>
        <end position="1015"/>
    </location>
</feature>
<feature type="transmembrane region" description="Helical; Name=S5 of repeat III" evidence="6">
    <location>
        <begin position="1016"/>
        <end position="1035"/>
    </location>
</feature>
<feature type="topological domain" description="Extracellular" evidence="6">
    <location>
        <begin position="1036"/>
        <end position="1125"/>
    </location>
</feature>
<feature type="transmembrane region" description="Helical; Name=S6 of repeat III" evidence="6">
    <location>
        <begin position="1126"/>
        <end position="1146"/>
    </location>
</feature>
<feature type="topological domain" description="Cytoplasmic" evidence="6">
    <location>
        <begin position="1147"/>
        <end position="1203"/>
    </location>
</feature>
<feature type="transmembrane region" description="Helical; Name=S1 of repeat IV" evidence="6">
    <location>
        <begin position="1204"/>
        <end position="1222"/>
    </location>
</feature>
<feature type="topological domain" description="Extracellular" evidence="6">
    <location>
        <begin position="1223"/>
        <end position="1237"/>
    </location>
</feature>
<feature type="transmembrane region" description="Helical; Name=S2 of repeat IV" evidence="6">
    <location>
        <begin position="1238"/>
        <end position="1257"/>
    </location>
</feature>
<feature type="topological domain" description="Cytoplasmic" evidence="6">
    <location>
        <begin position="1258"/>
        <end position="1264"/>
    </location>
</feature>
<feature type="transmembrane region" description="Helical; Name=S3 of repeat IV" evidence="6">
    <location>
        <begin position="1265"/>
        <end position="1286"/>
    </location>
</feature>
<feature type="topological domain" description="Extracellular" evidence="6">
    <location>
        <begin position="1287"/>
        <end position="1311"/>
    </location>
</feature>
<feature type="transmembrane region" description="Helical; Name=S4 of repeat IV" evidence="6">
    <location>
        <begin position="1312"/>
        <end position="1331"/>
    </location>
</feature>
<feature type="topological domain" description="Cytoplasmic" evidence="6">
    <location>
        <begin position="1332"/>
        <end position="1350"/>
    </location>
</feature>
<feature type="transmembrane region" description="Helical; Name=S5 of repeat IV" evidence="6">
    <location>
        <begin position="1351"/>
        <end position="1370"/>
    </location>
</feature>
<feature type="topological domain" description="Extracellular" evidence="6">
    <location>
        <begin position="1371"/>
        <end position="1437"/>
    </location>
</feature>
<feature type="transmembrane region" description="Helical; Name=S6 of repeat IV" evidence="6">
    <location>
        <begin position="1438"/>
        <end position="1462"/>
    </location>
</feature>
<feature type="topological domain" description="Cytoplasmic" evidence="6">
    <location>
        <begin position="1463"/>
        <end position="1610"/>
    </location>
</feature>
<feature type="repeat" description="I">
    <location>
        <begin position="112"/>
        <end position="408"/>
    </location>
</feature>
<feature type="repeat" description="II">
    <location>
        <begin position="508"/>
        <end position="754"/>
    </location>
</feature>
<feature type="repeat" description="III">
    <location>
        <begin position="871"/>
        <end position="1153"/>
    </location>
</feature>
<feature type="repeat" description="IV">
    <location>
        <begin position="1190"/>
        <end position="1465"/>
    </location>
</feature>
<feature type="region of interest" description="Disordered" evidence="7">
    <location>
        <begin position="1"/>
        <end position="99"/>
    </location>
</feature>
<feature type="region of interest" description="Binding to the beta subunit" evidence="1">
    <location>
        <begin position="428"/>
        <end position="445"/>
    </location>
</feature>
<feature type="region of interest" description="Disordered" evidence="7">
    <location>
        <begin position="448"/>
        <end position="487"/>
    </location>
</feature>
<feature type="region of interest" description="Disordered" evidence="7">
    <location>
        <begin position="765"/>
        <end position="846"/>
    </location>
</feature>
<feature type="region of interest" description="Dihydropyridine binding" evidence="1">
    <location>
        <begin position="1073"/>
        <end position="1163"/>
    </location>
</feature>
<feature type="region of interest" description="Dihydropyridine binding" evidence="1">
    <location>
        <begin position="1418"/>
        <end position="1484"/>
    </location>
</feature>
<feature type="region of interest" description="Phenylalkylamine binding" evidence="1">
    <location>
        <begin position="1430"/>
        <end position="1473"/>
    </location>
</feature>
<feature type="compositionally biased region" description="Polar residues" evidence="7">
    <location>
        <begin position="37"/>
        <end position="51"/>
    </location>
</feature>
<feature type="compositionally biased region" description="Low complexity" evidence="7">
    <location>
        <begin position="53"/>
        <end position="66"/>
    </location>
</feature>
<feature type="compositionally biased region" description="Basic residues" evidence="7">
    <location>
        <begin position="81"/>
        <end position="92"/>
    </location>
</feature>
<feature type="compositionally biased region" description="Polar residues" evidence="7">
    <location>
        <begin position="462"/>
        <end position="487"/>
    </location>
</feature>
<feature type="compositionally biased region" description="Basic and acidic residues" evidence="7">
    <location>
        <begin position="765"/>
        <end position="789"/>
    </location>
</feature>
<feature type="compositionally biased region" description="Polar residues" evidence="7">
    <location>
        <begin position="790"/>
        <end position="801"/>
    </location>
</feature>
<feature type="compositionally biased region" description="Acidic residues" evidence="7">
    <location>
        <begin position="824"/>
        <end position="836"/>
    </location>
</feature>
<feature type="binding site" evidence="3">
    <location>
        <position position="363"/>
    </location>
    <ligand>
        <name>Ca(2+)</name>
        <dbReference type="ChEBI" id="CHEBI:29108"/>
    </ligand>
</feature>
<feature type="binding site" evidence="3">
    <location>
        <position position="704"/>
    </location>
    <ligand>
        <name>Ca(2+)</name>
        <dbReference type="ChEBI" id="CHEBI:29108"/>
    </ligand>
</feature>
<feature type="binding site" evidence="3">
    <location>
        <position position="1099"/>
    </location>
    <ligand>
        <name>Ca(2+)</name>
        <dbReference type="ChEBI" id="CHEBI:29108"/>
    </ligand>
</feature>
<feature type="glycosylation site" description="N-linked (GlcNAc...) asparagine" evidence="6">
    <location>
        <position position="154"/>
    </location>
</feature>
<feature type="glycosylation site" description="N-linked (GlcNAc...) asparagine" evidence="6">
    <location>
        <position position="224"/>
    </location>
</feature>
<feature type="glycosylation site" description="N-linked (GlcNAc...) asparagine" evidence="6">
    <location>
        <position position="328"/>
    </location>
</feature>
<feature type="splice variant" id="VSP_000915" description="In isoform CACH3D." evidence="8">
    <original>GYFSDAWNTFDSLIVIGSIIDVALSEADPTESESLPLPTATPG</original>
    <variation>HYFTDAWNTFDALIVVGSVVDIAITEVN</variation>
    <location>
        <begin position="1261"/>
        <end position="1303"/>
    </location>
</feature>
<comment type="function">
    <text evidence="4">Voltage-sensitive calcium channels (VSCC) mediate the entry of calcium ions into excitable cells and are also involved in a variety of calcium-dependent processes, including muscle contraction, hormone or neurotransmitter release, gene expression, cell motility, cell division and cell death. The isoform alpha-1D gives rise to L-type calcium currents. Long-lasting (L-type) calcium channels belong to the 'high-voltage activated' (HVA) group. They are blocked by dihydropyridines (DHP), phenylalkylamines, and by benzothiazepines.</text>
</comment>
<comment type="catalytic activity">
    <reaction evidence="4">
        <text>Ca(2+)(in) = Ca(2+)(out)</text>
        <dbReference type="Rhea" id="RHEA:29671"/>
        <dbReference type="ChEBI" id="CHEBI:29108"/>
    </reaction>
</comment>
<comment type="subunit">
    <text evidence="2 4 5">Voltage-dependent calcium channels are multisubunit complexes, consisting of alpha-1, alpha-2, beta and delta subunits in a 1:1:1:1 ratio. The channel activity is directed by the pore-forming and voltage-sensitive alpha-1 subunit. In many cases, this subunit is sufficient to generate voltage-sensitive calcium channel activity. The auxiliary subunits beta and alpha-2/delta linked by a disulfide bridge regulate the channel activity. Interacts with RIMBP2. Interacts with CABP1 and CABP4, resulting in a near elimination of calcium-dependent inactivation of the channel (By similarity).</text>
</comment>
<comment type="subcellular location">
    <subcellularLocation>
        <location evidence="4">Membrane</location>
        <topology evidence="6">Multi-pass membrane protein</topology>
    </subcellularLocation>
</comment>
<comment type="alternative products">
    <event type="alternative splicing"/>
    <isoform>
        <id>Q99244-1</id>
        <name>HCA3A</name>
        <sequence type="displayed"/>
    </isoform>
    <isoform>
        <id>Q99244-3</id>
        <name>CACH3B</name>
        <sequence type="not described"/>
    </isoform>
    <isoform>
        <id>Q99244-2</id>
        <name>CACH3D</name>
        <sequence type="described" ref="VSP_000915"/>
    </isoform>
    <text>Additional isoforms seem to exist.</text>
</comment>
<comment type="tissue specificity">
    <text>Expressed in brain, heart and skeletal muscle.</text>
</comment>
<comment type="domain">
    <text>Each of the four internal repeats contains five hydrophobic transmembrane segments (S1, S2, S3, S5, S6) and one positively charged transmembrane segment (S4). S4 segments probably represent the voltage-sensor and are characterized by a series of positively charged amino acids at every third position.</text>
</comment>
<comment type="similarity">
    <text evidence="9">Belongs to the calcium channel alpha-1 subunit (TC 1.A.1.11) family. CACNA1D subfamily.</text>
</comment>
<gene>
    <name type="primary">CACNA1D</name>
    <name type="synonym">CACH3</name>
    <name type="synonym">CACN4</name>
    <name type="synonym">CACNL1A2</name>
    <name type="synonym">CCHL1A2</name>
</gene>
<reference key="1">
    <citation type="journal article" date="1992" name="Mol. Endocrinol.">
        <title>Cloning of a novel alpha 1-subunit of the voltage-dependent calcium channel from the beta-cell.</title>
        <authorList>
            <person name="Yaney G.C."/>
            <person name="Wheeler M.B."/>
            <person name="Wei X."/>
            <person name="Perez-Reyes E."/>
            <person name="Birnbaumer L."/>
            <person name="Boyd A.E. III"/>
            <person name="Moss L.G."/>
        </authorList>
    </citation>
    <scope>NUCLEOTIDE SEQUENCE [MRNA] (ISOFORM HCA3A)</scope>
    <source>
        <tissue>Insulinoma</tissue>
    </source>
</reference>
<reference key="2">
    <citation type="journal article" date="1990" name="J. Biol. Chem.">
        <title>Molecular diversity of L-type calcium channels. Evidence for alternative splicing of the transcripts of three non-allelic genes.</title>
        <authorList>
            <person name="Perez-Reyes E."/>
            <person name="Wei X."/>
            <person name="Castellano A."/>
            <person name="Birnbaumer L."/>
        </authorList>
    </citation>
    <scope>NUCLEOTIDE SEQUENCE [MRNA] OF 1146-1441 (ISOFORMS CACH3B AND CACH3D)</scope>
    <source>
        <tissue>Heart</tissue>
    </source>
</reference>
<evidence type="ECO:0000250" key="1"/>
<evidence type="ECO:0000250" key="2">
    <source>
        <dbReference type="UniProtKB" id="O73700"/>
    </source>
</evidence>
<evidence type="ECO:0000250" key="3">
    <source>
        <dbReference type="UniProtKB" id="P07293"/>
    </source>
</evidence>
<evidence type="ECO:0000250" key="4">
    <source>
        <dbReference type="UniProtKB" id="Q01668"/>
    </source>
</evidence>
<evidence type="ECO:0000250" key="5">
    <source>
        <dbReference type="UniProtKB" id="Q99246"/>
    </source>
</evidence>
<evidence type="ECO:0000255" key="6"/>
<evidence type="ECO:0000256" key="7">
    <source>
        <dbReference type="SAM" id="MobiDB-lite"/>
    </source>
</evidence>
<evidence type="ECO:0000303" key="8">
    <source>
    </source>
</evidence>
<evidence type="ECO:0000305" key="9"/>
<name>CAC1D_MESAU</name>
<dbReference type="EMBL" id="M57969">
    <property type="protein sequence ID" value="AAB59702.1"/>
    <property type="molecule type" value="mRNA"/>
</dbReference>
<dbReference type="EMBL" id="M57970">
    <property type="protein sequence ID" value="AAA62807.1"/>
    <property type="molecule type" value="mRNA"/>
</dbReference>
<dbReference type="PIR" id="A46227">
    <property type="entry name" value="A46227"/>
</dbReference>
<dbReference type="SMR" id="Q99244"/>
<dbReference type="STRING" id="10036.ENSMAUP00000022868"/>
<dbReference type="GlyCosmos" id="Q99244">
    <property type="glycosylation" value="3 sites, No reported glycans"/>
</dbReference>
<dbReference type="eggNOG" id="KOG2301">
    <property type="taxonomic scope" value="Eukaryota"/>
</dbReference>
<dbReference type="Proteomes" id="UP000189706">
    <property type="component" value="Unplaced"/>
</dbReference>
<dbReference type="GO" id="GO:0005891">
    <property type="term" value="C:voltage-gated calcium channel complex"/>
    <property type="evidence" value="ECO:0007669"/>
    <property type="project" value="InterPro"/>
</dbReference>
<dbReference type="GO" id="GO:0008331">
    <property type="term" value="F:high voltage-gated calcium channel activity"/>
    <property type="evidence" value="ECO:0007669"/>
    <property type="project" value="TreeGrafter"/>
</dbReference>
<dbReference type="GO" id="GO:0046872">
    <property type="term" value="F:metal ion binding"/>
    <property type="evidence" value="ECO:0007669"/>
    <property type="project" value="UniProtKB-KW"/>
</dbReference>
<dbReference type="GO" id="GO:0098703">
    <property type="term" value="P:calcium ion import across plasma membrane"/>
    <property type="evidence" value="ECO:0007669"/>
    <property type="project" value="TreeGrafter"/>
</dbReference>
<dbReference type="GO" id="GO:0045762">
    <property type="term" value="P:positive regulation of adenylate cyclase activity"/>
    <property type="evidence" value="ECO:0000250"/>
    <property type="project" value="UniProtKB"/>
</dbReference>
<dbReference type="FunFam" id="1.10.287.70:FF:000007">
    <property type="entry name" value="Voltage-dependent L-type calcium channel subunit alpha"/>
    <property type="match status" value="1"/>
</dbReference>
<dbReference type="FunFam" id="1.10.287.70:FF:000009">
    <property type="entry name" value="Voltage-dependent L-type calcium channel subunit alpha"/>
    <property type="match status" value="1"/>
</dbReference>
<dbReference type="FunFam" id="1.10.287.70:FF:000021">
    <property type="entry name" value="Voltage-dependent L-type calcium channel subunit alpha"/>
    <property type="match status" value="1"/>
</dbReference>
<dbReference type="FunFam" id="1.20.120.350:FF:000001">
    <property type="entry name" value="Voltage-dependent L-type calcium channel subunit alpha"/>
    <property type="match status" value="1"/>
</dbReference>
<dbReference type="FunFam" id="1.20.120.350:FF:000006">
    <property type="entry name" value="Voltage-dependent L-type calcium channel subunit alpha"/>
    <property type="match status" value="1"/>
</dbReference>
<dbReference type="FunFam" id="1.20.120.350:FF:000010">
    <property type="entry name" value="Voltage-dependent L-type calcium channel subunit alpha"/>
    <property type="match status" value="1"/>
</dbReference>
<dbReference type="FunFam" id="1.20.120.350:FF:000027">
    <property type="entry name" value="Voltage-dependent L-type calcium channel subunit alpha"/>
    <property type="match status" value="1"/>
</dbReference>
<dbReference type="FunFam" id="1.10.238.10:FF:000063">
    <property type="entry name" value="Voltage-dependent N-type calcium channel subunit alpha"/>
    <property type="match status" value="1"/>
</dbReference>
<dbReference type="Gene3D" id="1.10.287.70">
    <property type="match status" value="4"/>
</dbReference>
<dbReference type="Gene3D" id="6.10.250.2500">
    <property type="match status" value="1"/>
</dbReference>
<dbReference type="Gene3D" id="1.10.238.10">
    <property type="entry name" value="EF-hand"/>
    <property type="match status" value="1"/>
</dbReference>
<dbReference type="Gene3D" id="1.20.120.350">
    <property type="entry name" value="Voltage-gated potassium channels. Chain C"/>
    <property type="match status" value="4"/>
</dbReference>
<dbReference type="InterPro" id="IPR031649">
    <property type="entry name" value="GPHH_dom"/>
</dbReference>
<dbReference type="InterPro" id="IPR005821">
    <property type="entry name" value="Ion_trans_dom"/>
</dbReference>
<dbReference type="InterPro" id="IPR005452">
    <property type="entry name" value="LVDCC_a1dsu"/>
</dbReference>
<dbReference type="InterPro" id="IPR014873">
    <property type="entry name" value="VDCC_a1su_IQ"/>
</dbReference>
<dbReference type="InterPro" id="IPR050599">
    <property type="entry name" value="VDCC_alpha-1_subunit"/>
</dbReference>
<dbReference type="InterPro" id="IPR005446">
    <property type="entry name" value="VDCC_L_a1su"/>
</dbReference>
<dbReference type="InterPro" id="IPR002077">
    <property type="entry name" value="VDCCAlpha1"/>
</dbReference>
<dbReference type="InterPro" id="IPR027359">
    <property type="entry name" value="Volt_channel_dom_sf"/>
</dbReference>
<dbReference type="PANTHER" id="PTHR45628">
    <property type="entry name" value="VOLTAGE-DEPENDENT CALCIUM CHANNEL TYPE A SUBUNIT ALPHA-1"/>
    <property type="match status" value="1"/>
</dbReference>
<dbReference type="PANTHER" id="PTHR45628:SF11">
    <property type="entry name" value="VOLTAGE-DEPENDENT L-TYPE CALCIUM CHANNEL SUBUNIT ALPHA-1D"/>
    <property type="match status" value="1"/>
</dbReference>
<dbReference type="Pfam" id="PF08763">
    <property type="entry name" value="Ca_chan_IQ"/>
    <property type="match status" value="1"/>
</dbReference>
<dbReference type="Pfam" id="PF16905">
    <property type="entry name" value="GPHH"/>
    <property type="match status" value="1"/>
</dbReference>
<dbReference type="Pfam" id="PF00520">
    <property type="entry name" value="Ion_trans"/>
    <property type="match status" value="4"/>
</dbReference>
<dbReference type="PRINTS" id="PR00167">
    <property type="entry name" value="CACHANNEL"/>
</dbReference>
<dbReference type="PRINTS" id="PR01630">
    <property type="entry name" value="LVDCCALPHA1"/>
</dbReference>
<dbReference type="PRINTS" id="PR01636">
    <property type="entry name" value="LVDCCALPHA1D"/>
</dbReference>
<dbReference type="SUPFAM" id="SSF81324">
    <property type="entry name" value="Voltage-gated potassium channels"/>
    <property type="match status" value="4"/>
</dbReference>
<organism>
    <name type="scientific">Mesocricetus auratus</name>
    <name type="common">Golden hamster</name>
    <dbReference type="NCBI Taxonomy" id="10036"/>
    <lineage>
        <taxon>Eukaryota</taxon>
        <taxon>Metazoa</taxon>
        <taxon>Chordata</taxon>
        <taxon>Craniata</taxon>
        <taxon>Vertebrata</taxon>
        <taxon>Euteleostomi</taxon>
        <taxon>Mammalia</taxon>
        <taxon>Eutheria</taxon>
        <taxon>Euarchontoglires</taxon>
        <taxon>Glires</taxon>
        <taxon>Rodentia</taxon>
        <taxon>Myomorpha</taxon>
        <taxon>Muroidea</taxon>
        <taxon>Cricetidae</taxon>
        <taxon>Cricetinae</taxon>
        <taxon>Mesocricetus</taxon>
    </lineage>
</organism>